<protein>
    <recommendedName>
        <fullName>High mobility group nucleosome-binding domain-containing protein 3</fullName>
    </recommendedName>
</protein>
<reference key="1">
    <citation type="journal article" date="2004" name="Genome Res.">
        <title>The status, quality, and expansion of the NIH full-length cDNA project: the Mammalian Gene Collection (MGC).</title>
        <authorList>
            <consortium name="The MGC Project Team"/>
        </authorList>
    </citation>
    <scope>NUCLEOTIDE SEQUENCE [LARGE SCALE MRNA]</scope>
    <source>
        <tissue>Kidney</tissue>
    </source>
</reference>
<reference key="2">
    <citation type="journal article" date="2012" name="Nat. Commun.">
        <title>Quantitative maps of protein phosphorylation sites across 14 different rat organs and tissues.</title>
        <authorList>
            <person name="Lundby A."/>
            <person name="Secher A."/>
            <person name="Lage K."/>
            <person name="Nordsborg N.B."/>
            <person name="Dmytriyev A."/>
            <person name="Lundby C."/>
            <person name="Olsen J.V."/>
        </authorList>
    </citation>
    <scope>PHOSPHORYLATION [LARGE SCALE ANALYSIS] AT SER-6</scope>
    <scope>IDENTIFICATION BY MASS SPECTROMETRY [LARGE SCALE ANALYSIS]</scope>
</reference>
<organism>
    <name type="scientific">Rattus norvegicus</name>
    <name type="common">Rat</name>
    <dbReference type="NCBI Taxonomy" id="10116"/>
    <lineage>
        <taxon>Eukaryota</taxon>
        <taxon>Metazoa</taxon>
        <taxon>Chordata</taxon>
        <taxon>Craniata</taxon>
        <taxon>Vertebrata</taxon>
        <taxon>Euteleostomi</taxon>
        <taxon>Mammalia</taxon>
        <taxon>Eutheria</taxon>
        <taxon>Euarchontoglires</taxon>
        <taxon>Glires</taxon>
        <taxon>Rodentia</taxon>
        <taxon>Myomorpha</taxon>
        <taxon>Muroidea</taxon>
        <taxon>Muridae</taxon>
        <taxon>Murinae</taxon>
        <taxon>Rattus</taxon>
    </lineage>
</organism>
<sequence>MPKRKSPENAEGKDGAKLTKQEPTRRSARLSAKPVPPKPEPKPRKTSAKKEPGTKINRAAKGKKEEKQEAGKEGTAPSANGDTKAEEVLSTNASH</sequence>
<gene>
    <name type="primary">Hmgn3</name>
</gene>
<name>HMGN3_RAT</name>
<accession>Q66H40</accession>
<proteinExistence type="evidence at protein level"/>
<keyword id="KW-0156">Chromatin regulator</keyword>
<keyword id="KW-0238">DNA-binding</keyword>
<keyword id="KW-0539">Nucleus</keyword>
<keyword id="KW-0597">Phosphoprotein</keyword>
<keyword id="KW-1185">Reference proteome</keyword>
<feature type="chain" id="PRO_0000232577" description="High mobility group nucleosome-binding domain-containing protein 3">
    <location>
        <begin position="1"/>
        <end position="95"/>
    </location>
</feature>
<feature type="region of interest" description="Disordered" evidence="3">
    <location>
        <begin position="1"/>
        <end position="95"/>
    </location>
</feature>
<feature type="compositionally biased region" description="Basic and acidic residues" evidence="3">
    <location>
        <begin position="1"/>
        <end position="25"/>
    </location>
</feature>
<feature type="compositionally biased region" description="Basic and acidic residues" evidence="3">
    <location>
        <begin position="39"/>
        <end position="53"/>
    </location>
</feature>
<feature type="compositionally biased region" description="Basic and acidic residues" evidence="3">
    <location>
        <begin position="62"/>
        <end position="72"/>
    </location>
</feature>
<feature type="modified residue" description="Phosphoserine" evidence="5">
    <location>
        <position position="6"/>
    </location>
</feature>
<feature type="modified residue" description="Phosphoserine" evidence="2">
    <location>
        <position position="78"/>
    </location>
</feature>
<dbReference type="EMBL" id="BC082036">
    <property type="protein sequence ID" value="AAH82036.1"/>
    <property type="molecule type" value="mRNA"/>
</dbReference>
<dbReference type="RefSeq" id="NP_001007021.1">
    <property type="nucleotide sequence ID" value="NM_001007020.2"/>
</dbReference>
<dbReference type="RefSeq" id="NP_001188282.1">
    <property type="nucleotide sequence ID" value="NM_001201353.1"/>
</dbReference>
<dbReference type="RefSeq" id="NP_001188283.1">
    <property type="nucleotide sequence ID" value="NM_001201354.1"/>
</dbReference>
<dbReference type="RefSeq" id="NP_001188284.1">
    <property type="nucleotide sequence ID" value="NM_001201355.1"/>
</dbReference>
<dbReference type="BioGRID" id="250246">
    <property type="interactions" value="2"/>
</dbReference>
<dbReference type="FunCoup" id="Q66H40">
    <property type="interactions" value="696"/>
</dbReference>
<dbReference type="STRING" id="10116.ENSRNOP00000066015"/>
<dbReference type="iPTMnet" id="Q66H40"/>
<dbReference type="PhosphoSitePlus" id="Q66H40"/>
<dbReference type="PaxDb" id="10116-ENSRNOP00000066015"/>
<dbReference type="GeneID" id="113990"/>
<dbReference type="KEGG" id="rno:113990"/>
<dbReference type="UCSC" id="RGD:1359106">
    <property type="organism name" value="rat"/>
</dbReference>
<dbReference type="AGR" id="RGD:1359106"/>
<dbReference type="CTD" id="9324"/>
<dbReference type="RGD" id="1359106">
    <property type="gene designation" value="Hmgn3"/>
</dbReference>
<dbReference type="eggNOG" id="ENOG502S60V">
    <property type="taxonomic scope" value="Eukaryota"/>
</dbReference>
<dbReference type="InParanoid" id="Q66H40"/>
<dbReference type="PhylomeDB" id="Q66H40"/>
<dbReference type="PRO" id="PR:Q66H40"/>
<dbReference type="Proteomes" id="UP000002494">
    <property type="component" value="Chromosome 8"/>
</dbReference>
<dbReference type="Bgee" id="ENSRNOG00000031032">
    <property type="expression patterns" value="Expressed in cerebellum and 20 other cell types or tissues"/>
</dbReference>
<dbReference type="ExpressionAtlas" id="Q66H40">
    <property type="expression patterns" value="baseline and differential"/>
</dbReference>
<dbReference type="GO" id="GO:0000785">
    <property type="term" value="C:chromatin"/>
    <property type="evidence" value="ECO:0007669"/>
    <property type="project" value="InterPro"/>
</dbReference>
<dbReference type="GO" id="GO:0005634">
    <property type="term" value="C:nucleus"/>
    <property type="evidence" value="ECO:0000266"/>
    <property type="project" value="RGD"/>
</dbReference>
<dbReference type="GO" id="GO:0003682">
    <property type="term" value="F:chromatin binding"/>
    <property type="evidence" value="ECO:0000266"/>
    <property type="project" value="RGD"/>
</dbReference>
<dbReference type="GO" id="GO:0031492">
    <property type="term" value="F:nucleosomal DNA binding"/>
    <property type="evidence" value="ECO:0007669"/>
    <property type="project" value="InterPro"/>
</dbReference>
<dbReference type="GO" id="GO:0006325">
    <property type="term" value="P:chromatin organization"/>
    <property type="evidence" value="ECO:0000318"/>
    <property type="project" value="GO_Central"/>
</dbReference>
<dbReference type="GO" id="GO:0045944">
    <property type="term" value="P:positive regulation of transcription by RNA polymerase II"/>
    <property type="evidence" value="ECO:0000266"/>
    <property type="project" value="RGD"/>
</dbReference>
<dbReference type="GO" id="GO:0061178">
    <property type="term" value="P:regulation of insulin secretion involved in cellular response to glucose stimulus"/>
    <property type="evidence" value="ECO:0000266"/>
    <property type="project" value="RGD"/>
</dbReference>
<dbReference type="GO" id="GO:0006357">
    <property type="term" value="P:regulation of transcription by RNA polymerase II"/>
    <property type="evidence" value="ECO:0000266"/>
    <property type="project" value="RGD"/>
</dbReference>
<dbReference type="GO" id="GO:0006366">
    <property type="term" value="P:transcription by RNA polymerase II"/>
    <property type="evidence" value="ECO:0000266"/>
    <property type="project" value="RGD"/>
</dbReference>
<dbReference type="InterPro" id="IPR000079">
    <property type="entry name" value="HMGN_fam"/>
</dbReference>
<dbReference type="PANTHER" id="PTHR23087:SF2">
    <property type="entry name" value="HIGH MOBILITY GROUP NUCLEOSOME-BINDING DOMAIN-CONTAINING PROTEIN 3"/>
    <property type="match status" value="1"/>
</dbReference>
<dbReference type="PANTHER" id="PTHR23087">
    <property type="entry name" value="NONHISTONE CHROMOSOMAL PROTEIN HMG"/>
    <property type="match status" value="1"/>
</dbReference>
<dbReference type="Pfam" id="PF01101">
    <property type="entry name" value="HMG14_17"/>
    <property type="match status" value="1"/>
</dbReference>
<dbReference type="PRINTS" id="PR00925">
    <property type="entry name" value="NONHISHMG17"/>
</dbReference>
<dbReference type="SMART" id="SM00527">
    <property type="entry name" value="HMG17"/>
    <property type="match status" value="1"/>
</dbReference>
<dbReference type="PROSITE" id="PS00355">
    <property type="entry name" value="HMG14_17"/>
    <property type="match status" value="1"/>
</dbReference>
<comment type="function">
    <text evidence="1">Binds to nucleosomes, regulating chromatin structure and consequently, chromatin-dependent processes such as transcription, DNA replication and DNA repair. Affects both insulin and glucagon levels and modulates the expression of pancreatic genes involved in insulin secretion. Regulates the expression of the glucose transporter SLC2A2 by binding specifically to its promoter region and recruiting PDX1 and additional transcription factors. Regulates the expression of SLC6A9, a glycine transporter which regulates the glycine concentration in synaptic junctions in the central nervous system, by binding to its transcription start site. May play a role in ocular development and astrocyte function (By similarity).</text>
</comment>
<comment type="subunit">
    <text evidence="2">Interacts with the ligand binding domain of the thyroid receptor (TR) (in vitro). Requires the presence of thyroid hormone for its interaction. Interacts with transcriptional regulator SEHBP. Interacts with nucleosomes.</text>
</comment>
<comment type="subcellular location">
    <subcellularLocation>
        <location evidence="1">Nucleus</location>
    </subcellularLocation>
</comment>
<comment type="similarity">
    <text evidence="4">Belongs to the HMGN family.</text>
</comment>
<evidence type="ECO:0000250" key="1"/>
<evidence type="ECO:0000250" key="2">
    <source>
        <dbReference type="UniProtKB" id="Q15651"/>
    </source>
</evidence>
<evidence type="ECO:0000256" key="3">
    <source>
        <dbReference type="SAM" id="MobiDB-lite"/>
    </source>
</evidence>
<evidence type="ECO:0000305" key="4"/>
<evidence type="ECO:0007744" key="5">
    <source>
    </source>
</evidence>